<comment type="function">
    <text evidence="1">Possesses a potent antimicrobial activity against Gram-positive and Gram-negative bacteria. Probably acts by disturbing membrane functions with its amphipathic structure (By similarity).</text>
</comment>
<comment type="subcellular location">
    <subcellularLocation>
        <location evidence="7">Secreted</location>
    </subcellularLocation>
</comment>
<comment type="tissue specificity">
    <text evidence="7">Expressed by the skin glands.</text>
</comment>
<comment type="similarity">
    <text evidence="6">Belongs to the frog skin active peptide (FSAP) family. Dermatoxin subfamily.</text>
</comment>
<comment type="online information" name="The antimicrobial peptide database">
    <link uri="https://wangapd3.com/database/query_output.php?ID=0907"/>
</comment>
<proteinExistence type="inferred from homology"/>
<name>DRT1_AGAAN</name>
<reference key="1">
    <citation type="journal article" date="1998" name="Biochim. Biophys. Acta">
        <title>Cloning of cDNAs encoding new peptides of the dermaseptin-family.</title>
        <authorList>
            <person name="Wechselberger C."/>
        </authorList>
    </citation>
    <scope>NUCLEOTIDE SEQUENCE [MRNA]</scope>
    <source>
        <tissue>Skin</tissue>
    </source>
</reference>
<reference key="2">
    <citation type="journal article" date="2008" name="Peptides">
        <title>A consistent nomenclature of antimicrobial peptides isolated from frogs of the subfamily Phyllomedusinae.</title>
        <authorList>
            <person name="Amiche M."/>
            <person name="Ladram A."/>
            <person name="Nicolas P."/>
        </authorList>
    </citation>
    <scope>NOMENCLATURE</scope>
</reference>
<protein>
    <recommendedName>
        <fullName evidence="4">Dermatoxin-A1</fullName>
        <shortName evidence="4">DRT-A1</shortName>
    </recommendedName>
    <alternativeName>
        <fullName evidence="5">Dermaseptin AA-1-1</fullName>
    </alternativeName>
</protein>
<keyword id="KW-0027">Amidation</keyword>
<keyword id="KW-0878">Amphibian defense peptide</keyword>
<keyword id="KW-0044">Antibiotic</keyword>
<keyword id="KW-0929">Antimicrobial</keyword>
<keyword id="KW-0165">Cleavage on pair of basic residues</keyword>
<keyword id="KW-0964">Secreted</keyword>
<keyword id="KW-0732">Signal</keyword>
<feature type="signal peptide" evidence="3">
    <location>
        <begin position="1"/>
        <end position="22"/>
    </location>
</feature>
<feature type="propeptide" id="PRO_0000007059" evidence="6">
    <location>
        <begin position="23"/>
        <end position="42"/>
    </location>
</feature>
<feature type="peptide" id="PRO_0000007060" description="Dermatoxin-A1" evidence="7">
    <location>
        <begin position="45"/>
        <end position="76"/>
    </location>
</feature>
<feature type="modified residue" description="Glutamine amide" evidence="2">
    <location>
        <position position="76"/>
    </location>
</feature>
<sequence length="77" mass="8464">MAFLKKSLFLVLFLGLVPLFLCENEKREGENEKEENDDQSEEKRSLGSFMKGVGKGLATVGKIVADQFGKLLEAGQG</sequence>
<dbReference type="EMBL" id="AJ005183">
    <property type="protein sequence ID" value="CAA06420.1"/>
    <property type="molecule type" value="mRNA"/>
</dbReference>
<dbReference type="GO" id="GO:0005576">
    <property type="term" value="C:extracellular region"/>
    <property type="evidence" value="ECO:0007669"/>
    <property type="project" value="UniProtKB-SubCell"/>
</dbReference>
<dbReference type="GO" id="GO:0042742">
    <property type="term" value="P:defense response to bacterium"/>
    <property type="evidence" value="ECO:0007669"/>
    <property type="project" value="UniProtKB-KW"/>
</dbReference>
<dbReference type="InterPro" id="IPR004275">
    <property type="entry name" value="Frog_antimicrobial_propeptide"/>
</dbReference>
<dbReference type="InterPro" id="IPR016322">
    <property type="entry name" value="FSAP"/>
</dbReference>
<dbReference type="Pfam" id="PF03032">
    <property type="entry name" value="FSAP_sig_propep"/>
    <property type="match status" value="1"/>
</dbReference>
<dbReference type="PIRSF" id="PIRSF001822">
    <property type="entry name" value="Dermaseptin_precursor"/>
    <property type="match status" value="1"/>
</dbReference>
<evidence type="ECO:0000250" key="1"/>
<evidence type="ECO:0000250" key="2">
    <source>
        <dbReference type="UniProtKB" id="Q5DVA5"/>
    </source>
</evidence>
<evidence type="ECO:0000255" key="3"/>
<evidence type="ECO:0000303" key="4">
    <source>
    </source>
</evidence>
<evidence type="ECO:0000303" key="5">
    <source>
    </source>
</evidence>
<evidence type="ECO:0000305" key="6"/>
<evidence type="ECO:0000305" key="7">
    <source>
    </source>
</evidence>
<accession>O93221</accession>
<organism>
    <name type="scientific">Agalychnis annae</name>
    <name type="common">Blue-sided leaf frog</name>
    <name type="synonym">Phyllomedusa annae</name>
    <dbReference type="NCBI Taxonomy" id="75990"/>
    <lineage>
        <taxon>Eukaryota</taxon>
        <taxon>Metazoa</taxon>
        <taxon>Chordata</taxon>
        <taxon>Craniata</taxon>
        <taxon>Vertebrata</taxon>
        <taxon>Euteleostomi</taxon>
        <taxon>Amphibia</taxon>
        <taxon>Batrachia</taxon>
        <taxon>Anura</taxon>
        <taxon>Neobatrachia</taxon>
        <taxon>Hyloidea</taxon>
        <taxon>Hylidae</taxon>
        <taxon>Phyllomedusinae</taxon>
        <taxon>Agalychnis</taxon>
    </lineage>
</organism>